<feature type="chain" id="PRO_0000204684" description="Peroxisomal acyl-coenzyme A oxidase 2">
    <location>
        <begin position="1"/>
        <end position="681"/>
    </location>
</feature>
<feature type="short sequence motif" description="Microbody targeting signal" evidence="5">
    <location>
        <begin position="679"/>
        <end position="681"/>
    </location>
</feature>
<feature type="modified residue" description="Phosphoserine" evidence="15">
    <location>
        <position position="3"/>
    </location>
</feature>
<feature type="modified residue" description="Phosphoserine" evidence="3">
    <location>
        <position position="9"/>
    </location>
</feature>
<feature type="modified residue" description="N6-succinyllysine" evidence="4">
    <location>
        <position position="66"/>
    </location>
</feature>
<feature type="modified residue" description="N6-succinyllysine" evidence="4">
    <location>
        <position position="137"/>
    </location>
</feature>
<feature type="modified residue" description="N6-succinyllysine" evidence="4">
    <location>
        <position position="303"/>
    </location>
</feature>
<feature type="modified residue" description="N6-succinyllysine" evidence="4">
    <location>
        <position position="453"/>
    </location>
</feature>
<feature type="modified residue" description="N6-succinyllysine" evidence="4">
    <location>
        <position position="561"/>
    </location>
</feature>
<feature type="modified residue" description="N6-succinyllysine" evidence="4">
    <location>
        <position position="667"/>
    </location>
</feature>
<evidence type="ECO:0000250" key="1">
    <source>
        <dbReference type="UniProtKB" id="O02767"/>
    </source>
</evidence>
<evidence type="ECO:0000250" key="2">
    <source>
        <dbReference type="UniProtKB" id="P07872"/>
    </source>
</evidence>
<evidence type="ECO:0000250" key="3">
    <source>
        <dbReference type="UniProtKB" id="Q99424"/>
    </source>
</evidence>
<evidence type="ECO:0000250" key="4">
    <source>
        <dbReference type="UniProtKB" id="Q9QXD1"/>
    </source>
</evidence>
<evidence type="ECO:0000255" key="5"/>
<evidence type="ECO:0000269" key="6">
    <source>
    </source>
</evidence>
<evidence type="ECO:0000269" key="7">
    <source>
    </source>
</evidence>
<evidence type="ECO:0000303" key="8">
    <source>
    </source>
</evidence>
<evidence type="ECO:0000303" key="9">
    <source>
    </source>
</evidence>
<evidence type="ECO:0000305" key="10"/>
<evidence type="ECO:0000305" key="11">
    <source>
    </source>
</evidence>
<evidence type="ECO:0000305" key="12">
    <source>
    </source>
</evidence>
<evidence type="ECO:0000312" key="13">
    <source>
        <dbReference type="EMBL" id="CAA64488.1"/>
    </source>
</evidence>
<evidence type="ECO:0000312" key="14">
    <source>
        <dbReference type="RGD" id="628684"/>
    </source>
</evidence>
<evidence type="ECO:0007744" key="15">
    <source>
    </source>
</evidence>
<keyword id="KW-0903">Direct protein sequencing</keyword>
<keyword id="KW-0274">FAD</keyword>
<keyword id="KW-0276">Fatty acid metabolism</keyword>
<keyword id="KW-0285">Flavoprotein</keyword>
<keyword id="KW-0443">Lipid metabolism</keyword>
<keyword id="KW-0560">Oxidoreductase</keyword>
<keyword id="KW-0576">Peroxisome</keyword>
<keyword id="KW-0597">Phosphoprotein</keyword>
<keyword id="KW-1185">Reference proteome</keyword>
<accession>P97562</accession>
<sequence length="681" mass="76799">MGSPMHRVSLGDHWSWQVHPDIDSERHSPSFSVERLTNILDGGLPNTVLRRKVESIIQSDPVFNLKKLYFMTREELYEDAIQKRFHLEKLAWSLGWSEDGPERIYANRVLDGNVNLSLHGVAMNAIRSLGSDEQIAKWGQLCKNFQIITTYAQTELGHGTYLQGLETEATYDEARQELVIHSPTMTSTKWWPGDLGWSVTHAVVLAQLTCLGVRHGMHAFIVPIRSLEDHTPLPGITVGDIGPKMGLEHIDNGFLQLNHVRVPRENMLSRFAEVLPDGTYQRLGTPQSNYLGMLVTRVQLLCKGILPSLQKACIIATRYSVIRHQSRLRPSDPEAKILEYQTQQQKLLPQLAVSYAFHFTATSLSEFFHSSYSAILKRDFSLLPELHALSTGMKATFADFCAQGAEICRRACGGHGYSKLSGLPTLVARATASCTYEGENTVLYLQVARFLMKSYLQAQASPGATPQKPLPQSVMYIATQRPARCSAQTAADFRCPDVYTTAWAYVSTRLIRDAAHRTQTLMKSGVDQHDAWNQTTVIHLQAAKAHCYFITVKNFKEAVEKLDKEPEIQRVLQRLCDLYALHGVLTNSGDFLHDGFLSGAQVDMAREAFLDLLPLIRKDAILLTDAFDFSDHCLNSALGCYDGHVYERLFEWAQKYPANTQENPAYKKYIRPLMLGWRHKM</sequence>
<name>ACOX2_RAT</name>
<reference key="1">
    <citation type="journal article" date="1996" name="Biochem. J.">
        <title>Molecular cloning and further characterization of rat peroxisomal trihydroxycoprostanoyl-CoA oxidase.</title>
        <authorList>
            <person name="Baumgart E."/>
            <person name="Vanhooren J.C.T."/>
            <person name="Fransen M."/>
            <person name="Van Leuven F."/>
            <person name="Fahimi H.D."/>
            <person name="Van Veldhoven P.P."/>
            <person name="Mannaerts G.P."/>
        </authorList>
    </citation>
    <scope>NUCLEOTIDE SEQUENCE [MRNA]</scope>
    <scope>PROTEIN SEQUENCE OF 27-33; 74-83; 128-137; 265-270; 328-336; 454-464 AND 656-667</scope>
    <scope>FUNCTION</scope>
    <scope>CATALYTIC ACTIVITY</scope>
    <scope>TISSUE SPECIFICITY</scope>
    <scope>SUBCELLULAR LOCATION</scope>
    <source>
        <tissue>Liver</tissue>
    </source>
</reference>
<reference key="2">
    <citation type="journal article" date="1992" name="J. Biol. Chem.">
        <title>Substrate specificities of rat liver peroxisomal acyl-CoA oxidases: palmitoyl-CoA oxidase (inducible acyl-CoA oxidase), pristanoyl-CoA oxidase (non-inducible acyl-CoA oxidase), and trihydroxycoprostanoyl-CoA oxidase.</title>
        <authorList>
            <person name="Van Veldhoven P.P."/>
            <person name="Vanhove G."/>
            <person name="Assselberghs S."/>
            <person name="Eyssen H.J."/>
            <person name="Mannaerts G.P."/>
        </authorList>
    </citation>
    <scope>FUNCTION</scope>
    <scope>CATALYTIC ACTIVITY</scope>
</reference>
<reference key="3">
    <citation type="journal article" date="2006" name="J. Proteome Res.">
        <title>Phosphoproteomic analysis of rat liver by high capacity IMAC and LC-MS/MS.</title>
        <authorList>
            <person name="Moser K."/>
            <person name="White F.M."/>
        </authorList>
    </citation>
    <scope>PHOSPHORYLATION [LARGE SCALE ANALYSIS] AT SER-3</scope>
    <scope>IDENTIFICATION BY MASS SPECTROMETRY [LARGE SCALE ANALYSIS]</scope>
</reference>
<comment type="function">
    <text evidence="6 7">Oxidizes the CoA esters of the bile acid intermediates di- and tri-hydroxycoprostanic acids (PubMed:1400324, PubMed:8947475). Capable of oxidizing short as well as long chain 2-methyl branched fatty acids (PubMed:1400324).</text>
</comment>
<comment type="catalytic activity">
    <reaction evidence="6 7">
        <text>(25R)-3alpha,7alpha,12alpha-trihydroxy-5beta-cholestan-26-oyl-CoA + A + H2O = (24R,25R)-3alpha,7alpha,12alpha,24-tetrahydroxy-5beta-cholestan-26-oyl-CoA + AH2</text>
        <dbReference type="Rhea" id="RHEA:15733"/>
        <dbReference type="ChEBI" id="CHEBI:13193"/>
        <dbReference type="ChEBI" id="CHEBI:15377"/>
        <dbReference type="ChEBI" id="CHEBI:17499"/>
        <dbReference type="ChEBI" id="CHEBI:58677"/>
        <dbReference type="ChEBI" id="CHEBI:59807"/>
        <dbReference type="EC" id="1.17.99.3"/>
    </reaction>
    <physiologicalReaction direction="left-to-right" evidence="11 12">
        <dbReference type="Rhea" id="RHEA:15734"/>
    </physiologicalReaction>
</comment>
<comment type="catalytic activity">
    <reaction evidence="1">
        <text>(25S)-3alpha,7alpha,12alpha-trihydroxy-5beta-cholestan-26-oyl-CoA + O2 = (24E)-3alpha,7alpha,12alpha-trihydroxy-5beta-cholest-24-en-26-oyl-CoA + H2O2</text>
        <dbReference type="Rhea" id="RHEA:46728"/>
        <dbReference type="ChEBI" id="CHEBI:15379"/>
        <dbReference type="ChEBI" id="CHEBI:16240"/>
        <dbReference type="ChEBI" id="CHEBI:59879"/>
        <dbReference type="ChEBI" id="CHEBI:77251"/>
    </reaction>
    <physiologicalReaction direction="left-to-right" evidence="1">
        <dbReference type="Rhea" id="RHEA:46729"/>
    </physiologicalReaction>
</comment>
<comment type="cofactor">
    <cofactor evidence="2">
        <name>FAD</name>
        <dbReference type="ChEBI" id="CHEBI:57692"/>
    </cofactor>
</comment>
<comment type="subunit">
    <text evidence="2">Homodimer.</text>
</comment>
<comment type="subcellular location">
    <subcellularLocation>
        <location evidence="7">Peroxisome</location>
    </subcellularLocation>
</comment>
<comment type="tissue specificity">
    <text evidence="7">Most abundant in liver. Also expressed in kidney. Not present in any other tissues tested.</text>
</comment>
<comment type="similarity">
    <text evidence="10">Belongs to the acyl-CoA oxidase family.</text>
</comment>
<organism>
    <name type="scientific">Rattus norvegicus</name>
    <name type="common">Rat</name>
    <dbReference type="NCBI Taxonomy" id="10116"/>
    <lineage>
        <taxon>Eukaryota</taxon>
        <taxon>Metazoa</taxon>
        <taxon>Chordata</taxon>
        <taxon>Craniata</taxon>
        <taxon>Vertebrata</taxon>
        <taxon>Euteleostomi</taxon>
        <taxon>Mammalia</taxon>
        <taxon>Eutheria</taxon>
        <taxon>Euarchontoglires</taxon>
        <taxon>Glires</taxon>
        <taxon>Rodentia</taxon>
        <taxon>Myomorpha</taxon>
        <taxon>Muroidea</taxon>
        <taxon>Muridae</taxon>
        <taxon>Murinae</taxon>
        <taxon>Rattus</taxon>
    </lineage>
</organism>
<protein>
    <recommendedName>
        <fullName evidence="3">Peroxisomal acyl-coenzyme A oxidase 2</fullName>
        <ecNumber evidence="6 7">1.17.99.3</ecNumber>
    </recommendedName>
    <alternativeName>
        <fullName>3-alpha,7-alpha,12-alpha-trihydroxy-5-beta-cholestanoyl-CoA 24-hydroxylase</fullName>
    </alternativeName>
    <alternativeName>
        <fullName evidence="1">3-alpha,7-alpha,12-alpha-trihydroxy-5-beta-cholestanoyl-CoA oxidase</fullName>
    </alternativeName>
    <alternativeName>
        <fullName evidence="8 9">Trihydroxycoprostanoyl-CoA oxidase</fullName>
        <shortName evidence="1">THCA-CoA oxidase</shortName>
        <shortName>THCCox</shortName>
    </alternativeName>
</protein>
<gene>
    <name evidence="14" type="primary">Acox2</name>
    <name evidence="13" type="synonym">Thcox</name>
</gene>
<proteinExistence type="evidence at protein level"/>
<dbReference type="EC" id="1.17.99.3" evidence="6 7"/>
<dbReference type="EMBL" id="X95189">
    <property type="protein sequence ID" value="CAA64488.1"/>
    <property type="molecule type" value="mRNA"/>
</dbReference>
<dbReference type="SMR" id="P97562"/>
<dbReference type="FunCoup" id="P97562">
    <property type="interactions" value="123"/>
</dbReference>
<dbReference type="STRING" id="10116.ENSRNOP00000010260"/>
<dbReference type="CarbonylDB" id="P97562"/>
<dbReference type="iPTMnet" id="P97562"/>
<dbReference type="PhosphoSitePlus" id="P97562"/>
<dbReference type="PaxDb" id="10116-ENSRNOP00000010260"/>
<dbReference type="AGR" id="RGD:628684"/>
<dbReference type="RGD" id="628684">
    <property type="gene designation" value="Acox2"/>
</dbReference>
<dbReference type="eggNOG" id="KOG0136">
    <property type="taxonomic scope" value="Eukaryota"/>
</dbReference>
<dbReference type="InParanoid" id="P97562"/>
<dbReference type="PhylomeDB" id="P97562"/>
<dbReference type="BioCyc" id="MetaCyc:MONOMER-14328"/>
<dbReference type="BRENDA" id="1.17.99.3">
    <property type="organism ID" value="5301"/>
</dbReference>
<dbReference type="Reactome" id="R-RNO-193368">
    <property type="pathway name" value="Synthesis of bile acids and bile salts via 7alpha-hydroxycholesterol"/>
</dbReference>
<dbReference type="Reactome" id="R-RNO-389887">
    <property type="pathway name" value="Beta-oxidation of pristanoyl-CoA"/>
</dbReference>
<dbReference type="Reactome" id="R-RNO-9033241">
    <property type="pathway name" value="Peroxisomal protein import"/>
</dbReference>
<dbReference type="PRO" id="PR:P97562"/>
<dbReference type="Proteomes" id="UP000002494">
    <property type="component" value="Unplaced"/>
</dbReference>
<dbReference type="GO" id="GO:0005777">
    <property type="term" value="C:peroxisome"/>
    <property type="evidence" value="ECO:0000314"/>
    <property type="project" value="HGNC-UCL"/>
</dbReference>
<dbReference type="GO" id="GO:0033791">
    <property type="term" value="F:3alpha,7alpha,12alpha-trihydroxy-5beta-cholestanoyl-CoA 24-hydroxylase activity"/>
    <property type="evidence" value="ECO:0000314"/>
    <property type="project" value="RGD"/>
</dbReference>
<dbReference type="GO" id="GO:0071949">
    <property type="term" value="F:FAD binding"/>
    <property type="evidence" value="ECO:0007669"/>
    <property type="project" value="InterPro"/>
</dbReference>
<dbReference type="GO" id="GO:0005504">
    <property type="term" value="F:fatty acid binding"/>
    <property type="evidence" value="ECO:0000314"/>
    <property type="project" value="RGD"/>
</dbReference>
<dbReference type="GO" id="GO:0050660">
    <property type="term" value="F:flavin adenine dinucleotide binding"/>
    <property type="evidence" value="ECO:0000314"/>
    <property type="project" value="RGD"/>
</dbReference>
<dbReference type="GO" id="GO:0016401">
    <property type="term" value="F:palmitoyl-CoA oxidase activity"/>
    <property type="evidence" value="ECO:0000318"/>
    <property type="project" value="GO_Central"/>
</dbReference>
<dbReference type="GO" id="GO:0006699">
    <property type="term" value="P:bile acid biosynthetic process"/>
    <property type="evidence" value="ECO:0000250"/>
    <property type="project" value="UniProtKB"/>
</dbReference>
<dbReference type="GO" id="GO:0006635">
    <property type="term" value="P:fatty acid beta-oxidation"/>
    <property type="evidence" value="ECO:0000314"/>
    <property type="project" value="RGD"/>
</dbReference>
<dbReference type="GO" id="GO:0033540">
    <property type="term" value="P:fatty acid beta-oxidation using acyl-CoA oxidase"/>
    <property type="evidence" value="ECO:0000266"/>
    <property type="project" value="RGD"/>
</dbReference>
<dbReference type="GO" id="GO:0006631">
    <property type="term" value="P:fatty acid metabolic process"/>
    <property type="evidence" value="ECO:0000270"/>
    <property type="project" value="RGD"/>
</dbReference>
<dbReference type="GO" id="GO:0000038">
    <property type="term" value="P:very long-chain fatty acid metabolic process"/>
    <property type="evidence" value="ECO:0000318"/>
    <property type="project" value="GO_Central"/>
</dbReference>
<dbReference type="CDD" id="cd01150">
    <property type="entry name" value="AXO"/>
    <property type="match status" value="1"/>
</dbReference>
<dbReference type="FunFam" id="1.10.540.10:FF:000006">
    <property type="entry name" value="Acyl-coenzyme A oxidase"/>
    <property type="match status" value="1"/>
</dbReference>
<dbReference type="FunFam" id="1.20.140.10:FF:000005">
    <property type="entry name" value="Acyl-coenzyme A oxidase"/>
    <property type="match status" value="1"/>
</dbReference>
<dbReference type="FunFam" id="1.20.140.10:FF:000007">
    <property type="entry name" value="Acyl-coenzyme A oxidase"/>
    <property type="match status" value="1"/>
</dbReference>
<dbReference type="FunFam" id="2.40.110.10:FF:000003">
    <property type="entry name" value="Acyl-coenzyme A oxidase"/>
    <property type="match status" value="1"/>
</dbReference>
<dbReference type="Gene3D" id="1.10.540.10">
    <property type="entry name" value="Acyl-CoA dehydrogenase/oxidase, N-terminal domain"/>
    <property type="match status" value="1"/>
</dbReference>
<dbReference type="Gene3D" id="2.40.110.10">
    <property type="entry name" value="Butyryl-CoA Dehydrogenase, subunit A, domain 2"/>
    <property type="match status" value="1"/>
</dbReference>
<dbReference type="Gene3D" id="1.20.140.10">
    <property type="entry name" value="Butyryl-CoA Dehydrogenase, subunit A, domain 3"/>
    <property type="match status" value="2"/>
</dbReference>
<dbReference type="InterPro" id="IPR034171">
    <property type="entry name" value="ACO"/>
</dbReference>
<dbReference type="InterPro" id="IPR055060">
    <property type="entry name" value="ACOX_C_alpha1"/>
</dbReference>
<dbReference type="InterPro" id="IPR029320">
    <property type="entry name" value="Acyl-CoA_ox_N"/>
</dbReference>
<dbReference type="InterPro" id="IPR046373">
    <property type="entry name" value="Acyl-CoA_Oxase/DH_mid-dom_sf"/>
</dbReference>
<dbReference type="InterPro" id="IPR012258">
    <property type="entry name" value="Acyl-CoA_oxidase"/>
</dbReference>
<dbReference type="InterPro" id="IPR002655">
    <property type="entry name" value="Acyl-CoA_oxidase_C"/>
</dbReference>
<dbReference type="InterPro" id="IPR036250">
    <property type="entry name" value="AcylCo_DH-like_C"/>
</dbReference>
<dbReference type="InterPro" id="IPR037069">
    <property type="entry name" value="AcylCoA_DH/ox_N_sf"/>
</dbReference>
<dbReference type="InterPro" id="IPR009100">
    <property type="entry name" value="AcylCoA_DH/oxidase_NM_dom_sf"/>
</dbReference>
<dbReference type="PANTHER" id="PTHR10909">
    <property type="entry name" value="ELECTRON TRANSPORT OXIDOREDUCTASE"/>
    <property type="match status" value="1"/>
</dbReference>
<dbReference type="PANTHER" id="PTHR10909:SF344">
    <property type="entry name" value="PEROXISOMAL ACYL-COENZYME A OXIDASE 2"/>
    <property type="match status" value="1"/>
</dbReference>
<dbReference type="Pfam" id="PF01756">
    <property type="entry name" value="ACOX"/>
    <property type="match status" value="1"/>
</dbReference>
<dbReference type="Pfam" id="PF22924">
    <property type="entry name" value="ACOX_C_alpha1"/>
    <property type="match status" value="1"/>
</dbReference>
<dbReference type="Pfam" id="PF14749">
    <property type="entry name" value="Acyl-CoA_ox_N"/>
    <property type="match status" value="1"/>
</dbReference>
<dbReference type="PIRSF" id="PIRSF000168">
    <property type="entry name" value="Acyl-CoA_oxidase"/>
    <property type="match status" value="1"/>
</dbReference>
<dbReference type="SUPFAM" id="SSF47203">
    <property type="entry name" value="Acyl-CoA dehydrogenase C-terminal domain-like"/>
    <property type="match status" value="2"/>
</dbReference>
<dbReference type="SUPFAM" id="SSF56645">
    <property type="entry name" value="Acyl-CoA dehydrogenase NM domain-like"/>
    <property type="match status" value="1"/>
</dbReference>